<protein>
    <recommendedName>
        <fullName evidence="1">DNA-directed RNA polymerase subunit alpha</fullName>
        <shortName evidence="1">RNAP subunit alpha</shortName>
        <ecNumber evidence="1">2.7.7.6</ecNumber>
    </recommendedName>
    <alternativeName>
        <fullName evidence="1">RNA polymerase subunit alpha</fullName>
    </alternativeName>
    <alternativeName>
        <fullName evidence="1">Transcriptase subunit alpha</fullName>
    </alternativeName>
</protein>
<name>RPOA_MANSM</name>
<sequence>MQGSVTEFLKPHLVDIEQVSPTHAKVILEPLERGFGHTLGNALRRILLSSMPGCAVTEVEIDGVLHEYSSKEGVQEDILEVLLNLKGLAVKVQNKDDVFLTLNKSGIGPVVAADITHDGDVEIVNPEHVICHLTDENASINMRIRVQRGRGYVPASARVHAQDEERPIGRLLVDACYSPVDRIAYNVEAARVEQRTDLDKLVIELETNGAIDPEEAIRRAATILAEQLDAFVDLRDVRQPEVKEEKPEFDPILLRPVDDLELTVRSANCLKAETIHYIGDLVQRTEVELLKTPNLGKKSLTEIKDVLASRGLSLGMRLENWPPASIAED</sequence>
<feature type="chain" id="PRO_0000175331" description="DNA-directed RNA polymerase subunit alpha">
    <location>
        <begin position="1"/>
        <end position="329"/>
    </location>
</feature>
<feature type="region of interest" description="Alpha N-terminal domain (alpha-NTD)" evidence="1">
    <location>
        <begin position="1"/>
        <end position="235"/>
    </location>
</feature>
<feature type="region of interest" description="Alpha C-terminal domain (alpha-CTD)" evidence="1">
    <location>
        <begin position="249"/>
        <end position="329"/>
    </location>
</feature>
<organism>
    <name type="scientific">Mannheimia succiniciproducens (strain KCTC 0769BP / MBEL55E)</name>
    <dbReference type="NCBI Taxonomy" id="221988"/>
    <lineage>
        <taxon>Bacteria</taxon>
        <taxon>Pseudomonadati</taxon>
        <taxon>Pseudomonadota</taxon>
        <taxon>Gammaproteobacteria</taxon>
        <taxon>Pasteurellales</taxon>
        <taxon>Pasteurellaceae</taxon>
        <taxon>Basfia</taxon>
    </lineage>
</organism>
<reference key="1">
    <citation type="journal article" date="2004" name="Nat. Biotechnol.">
        <title>The genome sequence of the capnophilic rumen bacterium Mannheimia succiniciproducens.</title>
        <authorList>
            <person name="Hong S.H."/>
            <person name="Kim J.S."/>
            <person name="Lee S.Y."/>
            <person name="In Y.H."/>
            <person name="Choi S.S."/>
            <person name="Rih J.-K."/>
            <person name="Kim C.H."/>
            <person name="Jeong H."/>
            <person name="Hur C.G."/>
            <person name="Kim J.J."/>
        </authorList>
    </citation>
    <scope>NUCLEOTIDE SEQUENCE [LARGE SCALE GENOMIC DNA]</scope>
    <source>
        <strain>KCTC 0769BP / MBEL55E</strain>
    </source>
</reference>
<comment type="function">
    <text evidence="1">DNA-dependent RNA polymerase catalyzes the transcription of DNA into RNA using the four ribonucleoside triphosphates as substrates.</text>
</comment>
<comment type="catalytic activity">
    <reaction evidence="1">
        <text>RNA(n) + a ribonucleoside 5'-triphosphate = RNA(n+1) + diphosphate</text>
        <dbReference type="Rhea" id="RHEA:21248"/>
        <dbReference type="Rhea" id="RHEA-COMP:14527"/>
        <dbReference type="Rhea" id="RHEA-COMP:17342"/>
        <dbReference type="ChEBI" id="CHEBI:33019"/>
        <dbReference type="ChEBI" id="CHEBI:61557"/>
        <dbReference type="ChEBI" id="CHEBI:140395"/>
        <dbReference type="EC" id="2.7.7.6"/>
    </reaction>
</comment>
<comment type="subunit">
    <text evidence="1">Homodimer. The RNAP catalytic core consists of 2 alpha, 1 beta, 1 beta' and 1 omega subunit. When a sigma factor is associated with the core the holoenzyme is formed, which can initiate transcription.</text>
</comment>
<comment type="domain">
    <text evidence="1">The N-terminal domain is essential for RNAP assembly and basal transcription, whereas the C-terminal domain is involved in interaction with transcriptional regulators and with upstream promoter elements.</text>
</comment>
<comment type="similarity">
    <text evidence="1">Belongs to the RNA polymerase alpha chain family.</text>
</comment>
<gene>
    <name evidence="1" type="primary">rpoA</name>
    <name type="ordered locus">MS2023</name>
</gene>
<proteinExistence type="inferred from homology"/>
<keyword id="KW-0240">DNA-directed RNA polymerase</keyword>
<keyword id="KW-0548">Nucleotidyltransferase</keyword>
<keyword id="KW-0804">Transcription</keyword>
<keyword id="KW-0808">Transferase</keyword>
<dbReference type="EC" id="2.7.7.6" evidence="1"/>
<dbReference type="EMBL" id="AE016827">
    <property type="protein sequence ID" value="AAU38630.1"/>
    <property type="molecule type" value="Genomic_DNA"/>
</dbReference>
<dbReference type="RefSeq" id="WP_011201181.1">
    <property type="nucleotide sequence ID" value="NC_006300.1"/>
</dbReference>
<dbReference type="SMR" id="Q65QY0"/>
<dbReference type="STRING" id="221988.MS2023"/>
<dbReference type="KEGG" id="msu:MS2023"/>
<dbReference type="eggNOG" id="COG0202">
    <property type="taxonomic scope" value="Bacteria"/>
</dbReference>
<dbReference type="HOGENOM" id="CLU_053084_0_0_6"/>
<dbReference type="OrthoDB" id="9805706at2"/>
<dbReference type="Proteomes" id="UP000000607">
    <property type="component" value="Chromosome"/>
</dbReference>
<dbReference type="GO" id="GO:0005737">
    <property type="term" value="C:cytoplasm"/>
    <property type="evidence" value="ECO:0007669"/>
    <property type="project" value="UniProtKB-ARBA"/>
</dbReference>
<dbReference type="GO" id="GO:0000428">
    <property type="term" value="C:DNA-directed RNA polymerase complex"/>
    <property type="evidence" value="ECO:0007669"/>
    <property type="project" value="UniProtKB-KW"/>
</dbReference>
<dbReference type="GO" id="GO:0003677">
    <property type="term" value="F:DNA binding"/>
    <property type="evidence" value="ECO:0007669"/>
    <property type="project" value="UniProtKB-UniRule"/>
</dbReference>
<dbReference type="GO" id="GO:0003899">
    <property type="term" value="F:DNA-directed RNA polymerase activity"/>
    <property type="evidence" value="ECO:0007669"/>
    <property type="project" value="UniProtKB-UniRule"/>
</dbReference>
<dbReference type="GO" id="GO:0046983">
    <property type="term" value="F:protein dimerization activity"/>
    <property type="evidence" value="ECO:0007669"/>
    <property type="project" value="InterPro"/>
</dbReference>
<dbReference type="GO" id="GO:0006351">
    <property type="term" value="P:DNA-templated transcription"/>
    <property type="evidence" value="ECO:0007669"/>
    <property type="project" value="UniProtKB-UniRule"/>
</dbReference>
<dbReference type="CDD" id="cd06928">
    <property type="entry name" value="RNAP_alpha_NTD"/>
    <property type="match status" value="1"/>
</dbReference>
<dbReference type="FunFam" id="1.10.150.20:FF:000001">
    <property type="entry name" value="DNA-directed RNA polymerase subunit alpha"/>
    <property type="match status" value="1"/>
</dbReference>
<dbReference type="FunFam" id="2.170.120.12:FF:000001">
    <property type="entry name" value="DNA-directed RNA polymerase subunit alpha"/>
    <property type="match status" value="1"/>
</dbReference>
<dbReference type="Gene3D" id="1.10.150.20">
    <property type="entry name" value="5' to 3' exonuclease, C-terminal subdomain"/>
    <property type="match status" value="1"/>
</dbReference>
<dbReference type="Gene3D" id="2.170.120.12">
    <property type="entry name" value="DNA-directed RNA polymerase, insert domain"/>
    <property type="match status" value="1"/>
</dbReference>
<dbReference type="Gene3D" id="3.30.1360.10">
    <property type="entry name" value="RNA polymerase, RBP11-like subunit"/>
    <property type="match status" value="1"/>
</dbReference>
<dbReference type="HAMAP" id="MF_00059">
    <property type="entry name" value="RNApol_bact_RpoA"/>
    <property type="match status" value="1"/>
</dbReference>
<dbReference type="InterPro" id="IPR011262">
    <property type="entry name" value="DNA-dir_RNA_pol_insert"/>
</dbReference>
<dbReference type="InterPro" id="IPR011263">
    <property type="entry name" value="DNA-dir_RNA_pol_RpoA/D/Rpb3"/>
</dbReference>
<dbReference type="InterPro" id="IPR011773">
    <property type="entry name" value="DNA-dir_RpoA"/>
</dbReference>
<dbReference type="InterPro" id="IPR036603">
    <property type="entry name" value="RBP11-like"/>
</dbReference>
<dbReference type="InterPro" id="IPR011260">
    <property type="entry name" value="RNAP_asu_C"/>
</dbReference>
<dbReference type="InterPro" id="IPR036643">
    <property type="entry name" value="RNApol_insert_sf"/>
</dbReference>
<dbReference type="NCBIfam" id="NF003513">
    <property type="entry name" value="PRK05182.1-2"/>
    <property type="match status" value="1"/>
</dbReference>
<dbReference type="NCBIfam" id="NF003519">
    <property type="entry name" value="PRK05182.2-5"/>
    <property type="match status" value="1"/>
</dbReference>
<dbReference type="NCBIfam" id="TIGR02027">
    <property type="entry name" value="rpoA"/>
    <property type="match status" value="1"/>
</dbReference>
<dbReference type="Pfam" id="PF01000">
    <property type="entry name" value="RNA_pol_A_bac"/>
    <property type="match status" value="1"/>
</dbReference>
<dbReference type="Pfam" id="PF03118">
    <property type="entry name" value="RNA_pol_A_CTD"/>
    <property type="match status" value="1"/>
</dbReference>
<dbReference type="Pfam" id="PF01193">
    <property type="entry name" value="RNA_pol_L"/>
    <property type="match status" value="1"/>
</dbReference>
<dbReference type="SMART" id="SM00662">
    <property type="entry name" value="RPOLD"/>
    <property type="match status" value="1"/>
</dbReference>
<dbReference type="SUPFAM" id="SSF47789">
    <property type="entry name" value="C-terminal domain of RNA polymerase alpha subunit"/>
    <property type="match status" value="1"/>
</dbReference>
<dbReference type="SUPFAM" id="SSF56553">
    <property type="entry name" value="Insert subdomain of RNA polymerase alpha subunit"/>
    <property type="match status" value="1"/>
</dbReference>
<dbReference type="SUPFAM" id="SSF55257">
    <property type="entry name" value="RBP11-like subunits of RNA polymerase"/>
    <property type="match status" value="1"/>
</dbReference>
<accession>Q65QY0</accession>
<evidence type="ECO:0000255" key="1">
    <source>
        <dbReference type="HAMAP-Rule" id="MF_00059"/>
    </source>
</evidence>